<proteinExistence type="evidence at protein level"/>
<name>MCE1_MOUSE</name>
<organism>
    <name type="scientific">Mus musculus</name>
    <name type="common">Mouse</name>
    <dbReference type="NCBI Taxonomy" id="10090"/>
    <lineage>
        <taxon>Eukaryota</taxon>
        <taxon>Metazoa</taxon>
        <taxon>Chordata</taxon>
        <taxon>Craniata</taxon>
        <taxon>Vertebrata</taxon>
        <taxon>Euteleostomi</taxon>
        <taxon>Mammalia</taxon>
        <taxon>Eutheria</taxon>
        <taxon>Euarchontoglires</taxon>
        <taxon>Glires</taxon>
        <taxon>Rodentia</taxon>
        <taxon>Myomorpha</taxon>
        <taxon>Muroidea</taxon>
        <taxon>Muridae</taxon>
        <taxon>Murinae</taxon>
        <taxon>Mus</taxon>
        <taxon>Mus</taxon>
    </lineage>
</organism>
<evidence type="ECO:0000250" key="1"/>
<evidence type="ECO:0000255" key="2"/>
<evidence type="ECO:0000255" key="3">
    <source>
        <dbReference type="PROSITE-ProRule" id="PRU00160"/>
    </source>
</evidence>
<evidence type="ECO:0000256" key="4">
    <source>
        <dbReference type="SAM" id="MobiDB-lite"/>
    </source>
</evidence>
<evidence type="ECO:0000269" key="5">
    <source>
    </source>
</evidence>
<evidence type="ECO:0000269" key="6">
    <source>
    </source>
</evidence>
<evidence type="ECO:0000269" key="7">
    <source>
    </source>
</evidence>
<evidence type="ECO:0000269" key="8">
    <source>
    </source>
</evidence>
<evidence type="ECO:0000305" key="9"/>
<evidence type="ECO:0000305" key="10">
    <source>
    </source>
</evidence>
<evidence type="ECO:0007829" key="11">
    <source>
        <dbReference type="PDB" id="1I9S"/>
    </source>
</evidence>
<evidence type="ECO:0007829" key="12">
    <source>
        <dbReference type="PDB" id="1I9T"/>
    </source>
</evidence>
<evidence type="ECO:0007829" key="13">
    <source>
        <dbReference type="PDB" id="3RTX"/>
    </source>
</evidence>
<dbReference type="EC" id="3.6.1.74" evidence="5"/>
<dbReference type="EC" id="2.7.7.50" evidence="5"/>
<dbReference type="EMBL" id="AF025653">
    <property type="protein sequence ID" value="AAB91558.1"/>
    <property type="molecule type" value="mRNA"/>
</dbReference>
<dbReference type="EMBL" id="AF034568">
    <property type="protein sequence ID" value="AAB88903.1"/>
    <property type="molecule type" value="mRNA"/>
</dbReference>
<dbReference type="EMBL" id="BC043657">
    <property type="protein sequence ID" value="AAH43657.1"/>
    <property type="molecule type" value="mRNA"/>
</dbReference>
<dbReference type="CCDS" id="CCDS38705.1"/>
<dbReference type="RefSeq" id="NP_036014.1">
    <property type="nucleotide sequence ID" value="NM_011884.4"/>
</dbReference>
<dbReference type="PDB" id="1I9S">
    <property type="method" value="X-ray"/>
    <property type="resolution" value="1.65 A"/>
    <property type="chains" value="A=1-210"/>
</dbReference>
<dbReference type="PDB" id="1I9T">
    <property type="method" value="X-ray"/>
    <property type="resolution" value="1.70 A"/>
    <property type="chains" value="A=1-210"/>
</dbReference>
<dbReference type="PDB" id="3RTX">
    <property type="method" value="X-ray"/>
    <property type="resolution" value="2.81 A"/>
    <property type="chains" value="A/B=226-567"/>
</dbReference>
<dbReference type="PDBsum" id="1I9S"/>
<dbReference type="PDBsum" id="1I9T"/>
<dbReference type="PDBsum" id="3RTX"/>
<dbReference type="SMR" id="O55236"/>
<dbReference type="BioGRID" id="204857">
    <property type="interactions" value="2"/>
</dbReference>
<dbReference type="DIP" id="DIP-61013N"/>
<dbReference type="FunCoup" id="O55236">
    <property type="interactions" value="3929"/>
</dbReference>
<dbReference type="IntAct" id="O55236">
    <property type="interactions" value="2"/>
</dbReference>
<dbReference type="MINT" id="O55236"/>
<dbReference type="STRING" id="10090.ENSMUSP00000103788"/>
<dbReference type="GlyGen" id="O55236">
    <property type="glycosylation" value="1 site, 1 N-linked glycan (1 site)"/>
</dbReference>
<dbReference type="iPTMnet" id="O55236"/>
<dbReference type="PhosphoSitePlus" id="O55236"/>
<dbReference type="PaxDb" id="10090-ENSMUSP00000103788"/>
<dbReference type="PeptideAtlas" id="O55236"/>
<dbReference type="ProteomicsDB" id="287328"/>
<dbReference type="Pumba" id="O55236"/>
<dbReference type="Antibodypedia" id="1158">
    <property type="antibodies" value="170 antibodies from 31 providers"/>
</dbReference>
<dbReference type="DNASU" id="24018"/>
<dbReference type="Ensembl" id="ENSMUST00000108153.9">
    <property type="protein sequence ID" value="ENSMUSP00000103788.3"/>
    <property type="gene ID" value="ENSMUSG00000028274.18"/>
</dbReference>
<dbReference type="GeneID" id="24018"/>
<dbReference type="KEGG" id="mmu:24018"/>
<dbReference type="UCSC" id="uc008sfv.2">
    <property type="organism name" value="mouse"/>
</dbReference>
<dbReference type="AGR" id="MGI:1329041"/>
<dbReference type="CTD" id="8732"/>
<dbReference type="MGI" id="MGI:1329041">
    <property type="gene designation" value="Rngtt"/>
</dbReference>
<dbReference type="VEuPathDB" id="HostDB:ENSMUSG00000028274"/>
<dbReference type="eggNOG" id="KOG2386">
    <property type="taxonomic scope" value="Eukaryota"/>
</dbReference>
<dbReference type="GeneTree" id="ENSGT00940000156953"/>
<dbReference type="HOGENOM" id="CLU_021710_3_0_1"/>
<dbReference type="InParanoid" id="O55236"/>
<dbReference type="OMA" id="FWDIWMS"/>
<dbReference type="OrthoDB" id="200924at2759"/>
<dbReference type="PhylomeDB" id="O55236"/>
<dbReference type="TreeFam" id="TF314914"/>
<dbReference type="BRENDA" id="2.7.7.50">
    <property type="organism ID" value="3474"/>
</dbReference>
<dbReference type="Reactome" id="R-MMU-72086">
    <property type="pathway name" value="mRNA Capping"/>
</dbReference>
<dbReference type="Reactome" id="R-MMU-77075">
    <property type="pathway name" value="RNA Pol II CTD phosphorylation and interaction with CE"/>
</dbReference>
<dbReference type="BioGRID-ORCS" id="24018">
    <property type="hits" value="25 hits in 63 CRISPR screens"/>
</dbReference>
<dbReference type="ChiTaRS" id="Rngtt">
    <property type="organism name" value="mouse"/>
</dbReference>
<dbReference type="EvolutionaryTrace" id="O55236"/>
<dbReference type="PRO" id="PR:O55236"/>
<dbReference type="Proteomes" id="UP000000589">
    <property type="component" value="Chromosome 4"/>
</dbReference>
<dbReference type="RNAct" id="O55236">
    <property type="molecule type" value="protein"/>
</dbReference>
<dbReference type="Bgee" id="ENSMUSG00000028274">
    <property type="expression patterns" value="Expressed in embryonic post-anal tail and 250 other cell types or tissues"/>
</dbReference>
<dbReference type="ExpressionAtlas" id="O55236">
    <property type="expression patterns" value="baseline and differential"/>
</dbReference>
<dbReference type="GO" id="GO:0005634">
    <property type="term" value="C:nucleus"/>
    <property type="evidence" value="ECO:0007669"/>
    <property type="project" value="UniProtKB-SubCell"/>
</dbReference>
<dbReference type="GO" id="GO:0005524">
    <property type="term" value="F:ATP binding"/>
    <property type="evidence" value="ECO:0007669"/>
    <property type="project" value="InterPro"/>
</dbReference>
<dbReference type="GO" id="GO:0005525">
    <property type="term" value="F:GTP binding"/>
    <property type="evidence" value="ECO:0007669"/>
    <property type="project" value="UniProtKB-KW"/>
</dbReference>
<dbReference type="GO" id="GO:0050355">
    <property type="term" value="F:inorganic triphosphate phosphatase activity"/>
    <property type="evidence" value="ECO:0000250"/>
    <property type="project" value="UniProtKB"/>
</dbReference>
<dbReference type="GO" id="GO:0140818">
    <property type="term" value="F:mRNA 5'-triphosphate monophosphatase activity"/>
    <property type="evidence" value="ECO:0007669"/>
    <property type="project" value="InterPro"/>
</dbReference>
<dbReference type="GO" id="GO:0004484">
    <property type="term" value="F:mRNA guanylyltransferase activity"/>
    <property type="evidence" value="ECO:0000250"/>
    <property type="project" value="UniProtKB"/>
</dbReference>
<dbReference type="GO" id="GO:0004721">
    <property type="term" value="F:phosphoprotein phosphatase activity"/>
    <property type="evidence" value="ECO:0007669"/>
    <property type="project" value="UniProtKB-KW"/>
</dbReference>
<dbReference type="GO" id="GO:0004651">
    <property type="term" value="F:polynucleotide 5'-phosphatase activity"/>
    <property type="evidence" value="ECO:0007669"/>
    <property type="project" value="UniProtKB-EC"/>
</dbReference>
<dbReference type="GO" id="GO:0006370">
    <property type="term" value="P:7-methylguanosine mRNA capping"/>
    <property type="evidence" value="ECO:0000250"/>
    <property type="project" value="UniProtKB"/>
</dbReference>
<dbReference type="CDD" id="cd07895">
    <property type="entry name" value="Adenylation_mRNA_capping"/>
    <property type="match status" value="1"/>
</dbReference>
<dbReference type="CDD" id="cd17664">
    <property type="entry name" value="Mce1_N"/>
    <property type="match status" value="1"/>
</dbReference>
<dbReference type="FunFam" id="2.40.50.140:FF:000111">
    <property type="entry name" value="mRNA-capping enzyme"/>
    <property type="match status" value="1"/>
</dbReference>
<dbReference type="FunFam" id="3.30.1490.430:FF:000001">
    <property type="entry name" value="mRNA-capping enzyme"/>
    <property type="match status" value="1"/>
</dbReference>
<dbReference type="FunFam" id="3.30.470.30:FF:000040">
    <property type="entry name" value="mRNA-capping enzyme"/>
    <property type="match status" value="1"/>
</dbReference>
<dbReference type="FunFam" id="3.90.190.10:FF:000040">
    <property type="entry name" value="mRNA-capping enzyme"/>
    <property type="match status" value="1"/>
</dbReference>
<dbReference type="Gene3D" id="3.30.1490.430">
    <property type="match status" value="1"/>
</dbReference>
<dbReference type="Gene3D" id="3.30.470.30">
    <property type="entry name" value="DNA ligase/mRNA capping enzyme"/>
    <property type="match status" value="1"/>
</dbReference>
<dbReference type="Gene3D" id="2.40.50.140">
    <property type="entry name" value="Nucleic acid-binding proteins"/>
    <property type="match status" value="1"/>
</dbReference>
<dbReference type="Gene3D" id="3.90.190.10">
    <property type="entry name" value="Protein tyrosine phosphatase superfamily"/>
    <property type="match status" value="1"/>
</dbReference>
<dbReference type="InterPro" id="IPR000340">
    <property type="entry name" value="Dual-sp_phosphatase_cat-dom"/>
</dbReference>
<dbReference type="InterPro" id="IPR017074">
    <property type="entry name" value="mRNA_cap_enz_bifunc"/>
</dbReference>
<dbReference type="InterPro" id="IPR001339">
    <property type="entry name" value="mRNA_cap_enzyme_adenylation"/>
</dbReference>
<dbReference type="InterPro" id="IPR013846">
    <property type="entry name" value="mRNA_cap_enzyme_C"/>
</dbReference>
<dbReference type="InterPro" id="IPR051029">
    <property type="entry name" value="mRNA_Capping_Enz/RNA_Phosphat"/>
</dbReference>
<dbReference type="InterPro" id="IPR012340">
    <property type="entry name" value="NA-bd_OB-fold"/>
</dbReference>
<dbReference type="InterPro" id="IPR029021">
    <property type="entry name" value="Prot-tyrosine_phosphatase-like"/>
</dbReference>
<dbReference type="InterPro" id="IPR016130">
    <property type="entry name" value="Tyr_Pase_AS"/>
</dbReference>
<dbReference type="InterPro" id="IPR000387">
    <property type="entry name" value="Tyr_Pase_dom"/>
</dbReference>
<dbReference type="InterPro" id="IPR020422">
    <property type="entry name" value="TYR_PHOSPHATASE_DUAL_dom"/>
</dbReference>
<dbReference type="PANTHER" id="PTHR10367">
    <property type="entry name" value="MRNA-CAPPING ENZYME"/>
    <property type="match status" value="1"/>
</dbReference>
<dbReference type="PANTHER" id="PTHR10367:SF17">
    <property type="entry name" value="MRNA-CAPPING ENZYME"/>
    <property type="match status" value="1"/>
</dbReference>
<dbReference type="Pfam" id="PF00782">
    <property type="entry name" value="DSPc"/>
    <property type="match status" value="1"/>
</dbReference>
<dbReference type="Pfam" id="PF03919">
    <property type="entry name" value="mRNA_cap_C"/>
    <property type="match status" value="1"/>
</dbReference>
<dbReference type="Pfam" id="PF01331">
    <property type="entry name" value="mRNA_cap_enzyme"/>
    <property type="match status" value="1"/>
</dbReference>
<dbReference type="PIRSF" id="PIRSF036958">
    <property type="entry name" value="mRNA_capping_HCE"/>
    <property type="match status" value="1"/>
</dbReference>
<dbReference type="SUPFAM" id="SSF52799">
    <property type="entry name" value="(Phosphotyrosine protein) phosphatases II"/>
    <property type="match status" value="1"/>
</dbReference>
<dbReference type="SUPFAM" id="SSF56091">
    <property type="entry name" value="DNA ligase/mRNA capping enzyme, catalytic domain"/>
    <property type="match status" value="1"/>
</dbReference>
<dbReference type="SUPFAM" id="SSF50249">
    <property type="entry name" value="Nucleic acid-binding proteins"/>
    <property type="match status" value="1"/>
</dbReference>
<dbReference type="PROSITE" id="PS00383">
    <property type="entry name" value="TYR_PHOSPHATASE_1"/>
    <property type="match status" value="1"/>
</dbReference>
<dbReference type="PROSITE" id="PS50056">
    <property type="entry name" value="TYR_PHOSPHATASE_2"/>
    <property type="match status" value="1"/>
</dbReference>
<dbReference type="PROSITE" id="PS50054">
    <property type="entry name" value="TYR_PHOSPHATASE_DUAL"/>
    <property type="match status" value="1"/>
</dbReference>
<sequence>MAYNKIPPRWLNCPRRGQPVAGRFLPLKTMLGPRYDSQVAEENRFHPSMLSNYLKSLKVKMSLLVDLTNTSRFYDRNDIEKEGIKYIKLQCKGHGECPTTENTETFIRLCERFNERSPPELIGVHCTHGFNRTGFLICAFLVEKMDWSIEAAVATFAQARPPGIYKGDYLKELFRRYGDIEEAPPPPVLPDWCFEDEDEEDEDEDGKKDSEPGSSASFSKRRKERLKLGAIFLEGITVKGVTQVTTQPKLGEVQQKCHQFCGWEGSGFPGAQPVSMDKQNIRLLEQKPYKVSWKADGTRYMMLIDGTNEVFMIDRDNSVFHVSNLEFPFRKDLRMHLSNTLLDGEMIIDKVNGQAVPRYLIYDIIKFNAQPVGDCDFNIRLQCIEREIISPRHEKMKTGLIDKTQEPFSVRPKQFFDINISRKLLEGNFAKEVSHEMDGLIFQPIGKYKPGRCDDILKWKPPSLNSVDFRLKITRMGGEGLLPQNVGLLYVGGYERPFAQIKVTKELKQYDNKIIECKFENNSWVFMRQRIDKSFPNAYNTAMAVCNSISNPVTKEMLFEFIDRCAAAAQGQKRKYPLDPDTELMPPPPPKRLHRPT</sequence>
<comment type="function">
    <text evidence="5 6">Bifunctional mRNA-capping enzyme exhibiting RNA 5'-triphosphate monophosphatase activity in the N-terminal part and mRNA guanylyltransferase activity in the C-terminal part. Catalyzes the first two steps of cap formation: by removing the gamma-phosphate from the 5'-triphosphate end of nascent mRNA to yield a diphosphate end, and by transferring the GMP moiety of GTP to the 5'-diphosphate terminus of RNA via a covalent enzyme-GMP reaction intermediate.</text>
</comment>
<comment type="catalytic activity">
    <reaction evidence="5">
        <text>a 5'-end triphospho-ribonucleoside in mRNA + H2O = a 5'-end diphospho-ribonucleoside in mRNA + phosphate + H(+)</text>
        <dbReference type="Rhea" id="RHEA:67004"/>
        <dbReference type="Rhea" id="RHEA-COMP:17164"/>
        <dbReference type="Rhea" id="RHEA-COMP:17165"/>
        <dbReference type="ChEBI" id="CHEBI:15377"/>
        <dbReference type="ChEBI" id="CHEBI:15378"/>
        <dbReference type="ChEBI" id="CHEBI:43474"/>
        <dbReference type="ChEBI" id="CHEBI:167616"/>
        <dbReference type="ChEBI" id="CHEBI:167618"/>
        <dbReference type="EC" id="3.6.1.74"/>
    </reaction>
    <physiologicalReaction direction="left-to-right" evidence="10">
        <dbReference type="Rhea" id="RHEA:67005"/>
    </physiologicalReaction>
</comment>
<comment type="catalytic activity">
    <reaction evidence="5">
        <text>a 5'-end diphospho-ribonucleoside in mRNA + GTP + H(+) = a 5'-end (5'-triphosphoguanosine)-ribonucleoside in mRNA + diphosphate</text>
        <dbReference type="Rhea" id="RHEA:67012"/>
        <dbReference type="Rhea" id="RHEA-COMP:17165"/>
        <dbReference type="Rhea" id="RHEA-COMP:17166"/>
        <dbReference type="ChEBI" id="CHEBI:15378"/>
        <dbReference type="ChEBI" id="CHEBI:33019"/>
        <dbReference type="ChEBI" id="CHEBI:37565"/>
        <dbReference type="ChEBI" id="CHEBI:167616"/>
        <dbReference type="ChEBI" id="CHEBI:167617"/>
        <dbReference type="EC" id="2.7.7.50"/>
    </reaction>
    <physiologicalReaction direction="left-to-right" evidence="10">
        <dbReference type="Rhea" id="RHEA:67013"/>
    </physiologicalReaction>
</comment>
<comment type="activity regulation">
    <text>RNA triphosphatase activity is inhibited by vanadate, iodoacetate and magnesium.</text>
</comment>
<comment type="subunit">
    <text evidence="1 5 6 7">Interacts with SUPT5H and RNMT (By similarity). Interacts with POLR2A (via C-terminus); this enhances guanylyltransferase activity. Binds (via GTase domain) to the elongating phosphorylated form of RNA polymerase II; can form direct interactions with the phosphorylated POLR2A C-terminal domain and indirect interactions via bound RNA.</text>
</comment>
<comment type="interaction">
    <interactant intactId="EBI-16118241">
        <id>O55236</id>
    </interactant>
    <interactant intactId="EBI-15578122">
        <id>P16333-1</id>
        <label>NCK1</label>
    </interactant>
    <organismsDiffer>true</organismsDiffer>
    <experiments>3</experiments>
</comment>
<comment type="subcellular location">
    <subcellularLocation>
        <location>Nucleus</location>
    </subcellularLocation>
</comment>
<comment type="similarity">
    <text evidence="9">In the N-terminal section; belongs to the non-receptor class of the protein-tyrosine phosphatase family.</text>
</comment>
<comment type="similarity">
    <text evidence="9">In the C-terminal section; belongs to the eukaryotic GTase family.</text>
</comment>
<keyword id="KW-0002">3D-structure</keyword>
<keyword id="KW-0342">GTP-binding</keyword>
<keyword id="KW-0378">Hydrolase</keyword>
<keyword id="KW-0506">mRNA capping</keyword>
<keyword id="KW-0507">mRNA processing</keyword>
<keyword id="KW-0511">Multifunctional enzyme</keyword>
<keyword id="KW-0547">Nucleotide-binding</keyword>
<keyword id="KW-0548">Nucleotidyltransferase</keyword>
<keyword id="KW-0539">Nucleus</keyword>
<keyword id="KW-0904">Protein phosphatase</keyword>
<keyword id="KW-1185">Reference proteome</keyword>
<keyword id="KW-0808">Transferase</keyword>
<gene>
    <name type="primary">Rngtt</name>
    <name type="synonym">Cap1a</name>
</gene>
<feature type="chain" id="PRO_0000210109" description="mRNA-capping enzyme">
    <location>
        <begin position="1"/>
        <end position="597"/>
    </location>
</feature>
<feature type="domain" description="Tyrosine-protein phosphatase" evidence="3">
    <location>
        <begin position="25"/>
        <end position="183"/>
    </location>
</feature>
<feature type="region of interest" description="TPase">
    <location>
        <begin position="1"/>
        <end position="212"/>
    </location>
</feature>
<feature type="region of interest" description="Disordered" evidence="4">
    <location>
        <begin position="181"/>
        <end position="221"/>
    </location>
</feature>
<feature type="region of interest" description="GTase">
    <location>
        <begin position="229"/>
        <end position="597"/>
    </location>
</feature>
<feature type="region of interest" description="Interaction with POLR2A" evidence="5">
    <location>
        <begin position="330"/>
        <end position="386"/>
    </location>
</feature>
<feature type="region of interest" description="Disordered" evidence="4">
    <location>
        <begin position="573"/>
        <end position="597"/>
    </location>
</feature>
<feature type="compositionally biased region" description="Acidic residues" evidence="4">
    <location>
        <begin position="193"/>
        <end position="204"/>
    </location>
</feature>
<feature type="active site" description="Phosphocysteine intermediate" evidence="3">
    <location>
        <position position="126"/>
    </location>
</feature>
<feature type="active site" description="N6-GMP-lysine intermediate">
    <location>
        <position position="294"/>
    </location>
</feature>
<feature type="binding site">
    <location>
        <position position="299"/>
    </location>
    <ligand>
        <name>GTP</name>
        <dbReference type="ChEBI" id="CHEBI:37565"/>
    </ligand>
</feature>
<feature type="binding site" evidence="2">
    <location>
        <position position="315"/>
    </location>
    <ligand>
        <name>GTP</name>
        <dbReference type="ChEBI" id="CHEBI:37565"/>
    </ligand>
</feature>
<feature type="binding site" evidence="2">
    <location>
        <begin position="343"/>
        <end position="345"/>
    </location>
    <ligand>
        <name>GTP</name>
        <dbReference type="ChEBI" id="CHEBI:37565"/>
    </ligand>
</feature>
<feature type="binding site" evidence="2">
    <location>
        <begin position="458"/>
        <end position="460"/>
    </location>
    <ligand>
        <name>GTP</name>
        <dbReference type="ChEBI" id="CHEBI:37565"/>
    </ligand>
</feature>
<feature type="binding site" evidence="2">
    <location>
        <begin position="528"/>
        <end position="533"/>
    </location>
    <ligand>
        <name>GTP</name>
        <dbReference type="ChEBI" id="CHEBI:37565"/>
    </ligand>
</feature>
<feature type="mutagenesis site" description="No effect." evidence="8">
    <original>D</original>
    <variation>A</variation>
    <location>
        <position position="36"/>
    </location>
</feature>
<feature type="mutagenesis site" description="Decrease of &gt;90% of TPase activity." evidence="8">
    <original>D</original>
    <variation>A</variation>
    <location>
        <position position="66"/>
    </location>
</feature>
<feature type="mutagenesis site" description="No effect." evidence="8">
    <original>C</original>
    <variation>S</variation>
    <location>
        <position position="110"/>
    </location>
</feature>
<feature type="mutagenesis site" description="Decrease of 55-60% of TPase activity." evidence="8">
    <original>H</original>
    <variation>A</variation>
    <location>
        <position position="125"/>
    </location>
</feature>
<feature type="mutagenesis site" description="Loss of TPase activity." evidence="8">
    <original>C</original>
    <variation>S</variation>
    <location>
        <position position="126"/>
    </location>
</feature>
<feature type="mutagenesis site" description="Loss of TPase activity." evidence="8">
    <original>R</original>
    <variation>A</variation>
    <location>
        <position position="132"/>
    </location>
</feature>
<feature type="mutagenesis site" description="Decrease of 55-60% of TPase activity." evidence="8">
    <original>T</original>
    <variation>A</variation>
    <location>
        <position position="133"/>
    </location>
</feature>
<feature type="mutagenesis site" description="No effect." evidence="8">
    <original>C</original>
    <variation>S</variation>
    <location>
        <position position="138"/>
    </location>
</feature>
<feature type="mutagenesis site" description="No effect." evidence="8">
    <original>D</original>
    <variation>A</variation>
    <location>
        <position position="168"/>
    </location>
</feature>
<feature type="mutagenesis site" description="No effect." evidence="8">
    <original>K</original>
    <variation>A</variation>
    <location>
        <position position="290"/>
    </location>
</feature>
<feature type="mutagenesis site" description="Loss of GTase activity." evidence="6">
    <original>K</original>
    <variation>A</variation>
    <location>
        <position position="294"/>
    </location>
</feature>
<feature type="mutagenesis site" description="Almost complete loss of RNA-binding and loss of GTase activity." evidence="8">
    <original>R</original>
    <variation>A</variation>
    <location>
        <position position="315"/>
    </location>
</feature>
<feature type="mutagenesis site" description="At least 60% of RNA-binding activity and loss of GTase activity." evidence="8">
    <original>R</original>
    <variation>K</variation>
    <location>
        <position position="315"/>
    </location>
</feature>
<feature type="mutagenesis site" description="Increases stimulation of GTase activity by POLR2A binding." evidence="5">
    <original>C</original>
    <variation>R</variation>
    <location>
        <position position="375"/>
    </location>
</feature>
<feature type="mutagenesis site" description="Almost complete loss of RNA-binding and loss of GTase activity." evidence="8">
    <original>R</original>
    <variation>A</variation>
    <location>
        <position position="530"/>
    </location>
</feature>
<feature type="mutagenesis site" description="Loss of GTase activity." evidence="8">
    <original>R</original>
    <variation>K</variation>
    <location>
        <position position="530"/>
    </location>
</feature>
<feature type="mutagenesis site" description="Almost complete loss of RNA-binding and loss of GTase activity." evidence="8">
    <original>K</original>
    <variation>A</variation>
    <location>
        <position position="533"/>
    </location>
</feature>
<feature type="mutagenesis site" description="At least 60% of RNA-binding activity and loss of GTase activity." evidence="8">
    <original>K</original>
    <variation>R</variation>
    <location>
        <position position="533"/>
    </location>
</feature>
<feature type="mutagenesis site" description="Almost complete loss of RNA-binding and loss of GTase activity." evidence="8">
    <original>N</original>
    <variation>A</variation>
    <location>
        <position position="537"/>
    </location>
</feature>
<feature type="mutagenesis site" description="At least 60% of RNA binding activity and loss of GTase activity." evidence="8">
    <original>N</original>
    <variation>Q</variation>
    <location>
        <position position="537"/>
    </location>
</feature>
<feature type="turn" evidence="11">
    <location>
        <begin position="21"/>
        <end position="23"/>
    </location>
</feature>
<feature type="strand" evidence="11">
    <location>
        <begin position="24"/>
        <end position="27"/>
    </location>
</feature>
<feature type="helix" evidence="11">
    <location>
        <begin position="33"/>
        <end position="35"/>
    </location>
</feature>
<feature type="turn" evidence="11">
    <location>
        <begin position="36"/>
        <end position="38"/>
    </location>
</feature>
<feature type="helix" evidence="11">
    <location>
        <begin position="41"/>
        <end position="43"/>
    </location>
</feature>
<feature type="helix" evidence="11">
    <location>
        <begin position="47"/>
        <end position="56"/>
    </location>
</feature>
<feature type="strand" evidence="11">
    <location>
        <begin position="61"/>
        <end position="66"/>
    </location>
</feature>
<feature type="strand" evidence="11">
    <location>
        <begin position="71"/>
        <end position="74"/>
    </location>
</feature>
<feature type="helix" evidence="11">
    <location>
        <begin position="77"/>
        <end position="80"/>
    </location>
</feature>
<feature type="turn" evidence="11">
    <location>
        <begin position="81"/>
        <end position="83"/>
    </location>
</feature>
<feature type="strand" evidence="11">
    <location>
        <begin position="85"/>
        <end position="88"/>
    </location>
</feature>
<feature type="helix" evidence="11">
    <location>
        <begin position="100"/>
        <end position="110"/>
    </location>
</feature>
<feature type="turn" evidence="12">
    <location>
        <begin position="111"/>
        <end position="115"/>
    </location>
</feature>
<feature type="strand" evidence="11">
    <location>
        <begin position="121"/>
        <end position="125"/>
    </location>
</feature>
<feature type="strand" evidence="11">
    <location>
        <begin position="127"/>
        <end position="130"/>
    </location>
</feature>
<feature type="helix" evidence="11">
    <location>
        <begin position="131"/>
        <end position="145"/>
    </location>
</feature>
<feature type="helix" evidence="11">
    <location>
        <begin position="149"/>
        <end position="159"/>
    </location>
</feature>
<feature type="helix" evidence="11">
    <location>
        <begin position="167"/>
        <end position="177"/>
    </location>
</feature>
<feature type="helix" evidence="11">
    <location>
        <begin position="180"/>
        <end position="182"/>
    </location>
</feature>
<feature type="helix" evidence="11">
    <location>
        <begin position="191"/>
        <end position="194"/>
    </location>
</feature>
<feature type="strand" evidence="13">
    <location>
        <begin position="232"/>
        <end position="236"/>
    </location>
</feature>
<feature type="strand" evidence="13">
    <location>
        <begin position="241"/>
        <end position="243"/>
    </location>
</feature>
<feature type="helix" evidence="13">
    <location>
        <begin position="249"/>
        <end position="260"/>
    </location>
</feature>
<feature type="strand" evidence="13">
    <location>
        <begin position="265"/>
        <end position="267"/>
    </location>
</feature>
<feature type="strand" evidence="13">
    <location>
        <begin position="270"/>
        <end position="275"/>
    </location>
</feature>
<feature type="helix" evidence="13">
    <location>
        <begin position="280"/>
        <end position="282"/>
    </location>
</feature>
<feature type="helix" evidence="13">
    <location>
        <begin position="283"/>
        <end position="286"/>
    </location>
</feature>
<feature type="strand" evidence="13">
    <location>
        <begin position="289"/>
        <end position="294"/>
    </location>
</feature>
<feature type="strand" evidence="13">
    <location>
        <begin position="298"/>
        <end position="304"/>
    </location>
</feature>
<feature type="strand" evidence="13">
    <location>
        <begin position="310"/>
        <end position="313"/>
    </location>
</feature>
<feature type="strand" evidence="13">
    <location>
        <begin position="319"/>
        <end position="322"/>
    </location>
</feature>
<feature type="strand" evidence="13">
    <location>
        <begin position="332"/>
        <end position="336"/>
    </location>
</feature>
<feature type="strand" evidence="13">
    <location>
        <begin position="339"/>
        <end position="367"/>
    </location>
</feature>
<feature type="helix" evidence="13">
    <location>
        <begin position="372"/>
        <end position="374"/>
    </location>
</feature>
<feature type="helix" evidence="13">
    <location>
        <begin position="377"/>
        <end position="387"/>
    </location>
</feature>
<feature type="helix" evidence="13">
    <location>
        <begin position="389"/>
        <end position="398"/>
    </location>
</feature>
<feature type="turn" evidence="13">
    <location>
        <begin position="403"/>
        <end position="405"/>
    </location>
</feature>
<feature type="strand" evidence="13">
    <location>
        <begin position="406"/>
        <end position="412"/>
    </location>
</feature>
<feature type="helix" evidence="13">
    <location>
        <begin position="418"/>
        <end position="420"/>
    </location>
</feature>
<feature type="helix" evidence="13">
    <location>
        <begin position="421"/>
        <end position="424"/>
    </location>
</feature>
<feature type="strand" evidence="13">
    <location>
        <begin position="439"/>
        <end position="446"/>
    </location>
</feature>
<feature type="strand" evidence="13">
    <location>
        <begin position="451"/>
        <end position="459"/>
    </location>
</feature>
<feature type="helix" evidence="13">
    <location>
        <begin position="539"/>
        <end position="550"/>
    </location>
</feature>
<feature type="helix" evidence="13">
    <location>
        <begin position="555"/>
        <end position="565"/>
    </location>
</feature>
<reference key="1">
    <citation type="journal article" date="1997" name="Proc. Natl. Acad. Sci. U.S.A.">
        <title>Mammalian capping enzyme complements mutant Saccharomyces cerevisiae lacking mRNA guanylyltransferase and selectively binds the elongating form of RNA polymerase II.</title>
        <authorList>
            <person name="Yue Z."/>
            <person name="Maldonado E."/>
            <person name="Pillutla R."/>
            <person name="Cho H."/>
            <person name="Reinberg D."/>
            <person name="Shatkin A.J."/>
        </authorList>
    </citation>
    <scope>NUCLEOTIDE SEQUENCE [MRNA]</scope>
    <scope>MUTAGENESIS OF LYS-294</scope>
    <scope>FUNCTION</scope>
    <scope>SUBUNIT</scope>
</reference>
<reference key="2">
    <citation type="journal article" date="1997" name="Genes Dev.">
        <title>5'-Capping enzymes are targeted to pre-mRNA by binding to the phosphorylated carboxy-terminal domain of RNA polymerase II.</title>
        <authorList>
            <person name="McCracken S."/>
            <person name="Fong N."/>
            <person name="Rosonina E."/>
            <person name="Yankulov K."/>
            <person name="Brothers G."/>
            <person name="Siderovski D."/>
            <person name="Hessel A."/>
            <person name="Foster S."/>
            <person name="Shuman S."/>
            <person name="Bentley D.L."/>
        </authorList>
    </citation>
    <scope>NUCLEOTIDE SEQUENCE [MRNA]</scope>
    <scope>SUBUNIT</scope>
</reference>
<reference key="3">
    <citation type="journal article" date="2004" name="Genome Res.">
        <title>The status, quality, and expansion of the NIH full-length cDNA project: the Mammalian Gene Collection (MGC).</title>
        <authorList>
            <consortium name="The MGC Project Team"/>
        </authorList>
    </citation>
    <scope>NUCLEOTIDE SEQUENCE [LARGE SCALE MRNA]</scope>
    <source>
        <strain>FVB/N</strain>
        <tissue>Mammary gland</tissue>
    </source>
</reference>
<reference key="4">
    <citation type="journal article" date="1998" name="Proc. Natl. Acad. Sci. U.S.A.">
        <title>Mammalian capping enzyme binds RNA and uses protein tyrosine phosphatase mechanism.</title>
        <authorList>
            <person name="Wen Y."/>
            <person name="Yue Z."/>
            <person name="Shatkin A.J."/>
        </authorList>
    </citation>
    <scope>CHARACTERIZATION</scope>
    <scope>MUTAGENESIS</scope>
</reference>
<reference key="5">
    <citation type="journal article" date="2010" name="Cell">
        <title>A tissue-specific atlas of mouse protein phosphorylation and expression.</title>
        <authorList>
            <person name="Huttlin E.L."/>
            <person name="Jedrychowski M.P."/>
            <person name="Elias J.E."/>
            <person name="Goswami T."/>
            <person name="Rad R."/>
            <person name="Beausoleil S.A."/>
            <person name="Villen J."/>
            <person name="Haas W."/>
            <person name="Sowa M.E."/>
            <person name="Gygi S.P."/>
        </authorList>
    </citation>
    <scope>IDENTIFICATION BY MASS SPECTROMETRY [LARGE SCALE ANALYSIS]</scope>
    <source>
        <tissue>Kidney</tissue>
        <tissue>Spleen</tissue>
        <tissue>Testis</tissue>
    </source>
</reference>
<reference key="6">
    <citation type="journal article" date="2001" name="EMBO J.">
        <title>Structure and mechanism of the RNA triphosphatase component of mammalian mRNA capping enzyme.</title>
        <authorList>
            <person name="Changela A."/>
            <person name="Ho C.K."/>
            <person name="Martins A."/>
            <person name="Shuman S."/>
            <person name="Mondragon A."/>
        </authorList>
    </citation>
    <scope>X-RAY CRYSTALLOGRAPHY (1.65 ANGSTROMS)</scope>
</reference>
<reference key="7">
    <citation type="journal article" date="2011" name="Mol. Cell">
        <title>Structural insights to how mammalian capping enzyme reads the CTD code.</title>
        <authorList>
            <person name="Ghosh A."/>
            <person name="Shuman S."/>
            <person name="Lima C.D."/>
        </authorList>
    </citation>
    <scope>X-RAY CRYSTALLOGRAPHY (2.81 ANGSTROMS) OF 226-567 IN COMPLEX WITH GUANINE AND POLR2A PEPTIDE</scope>
    <scope>INTERACTION WITH POLR2A</scope>
    <scope>CATALYTIC ACTIVITY</scope>
    <scope>FUNCTION</scope>
    <scope>MUTAGENESIS OF CYS-375</scope>
</reference>
<accession>O55236</accession>
<protein>
    <recommendedName>
        <fullName>mRNA-capping enzyme</fullName>
    </recommendedName>
    <alternativeName>
        <fullName>HCE</fullName>
    </alternativeName>
    <alternativeName>
        <fullName>MCE1</fullName>
    </alternativeName>
    <domain>
        <recommendedName>
            <fullName>mRNA 5'-triphosphate monophosphatase</fullName>
            <ecNumber evidence="5">3.6.1.74</ecNumber>
        </recommendedName>
        <alternativeName>
            <fullName>mRNA 5'-phosphatase</fullName>
        </alternativeName>
    </domain>
    <domain>
        <recommendedName>
            <fullName>mRNA guanylyltransferase</fullName>
            <ecNumber evidence="5">2.7.7.50</ecNumber>
        </recommendedName>
        <alternativeName>
            <fullName>GTP--RNA guanylyltransferase</fullName>
            <shortName>GTase</shortName>
        </alternativeName>
    </domain>
</protein>